<reference key="1">
    <citation type="journal article" date="2008" name="J. Bacteriol.">
        <title>Genome sequence of a nephritogenic and highly transformable M49 strain of Streptococcus pyogenes.</title>
        <authorList>
            <person name="McShan W.M."/>
            <person name="Ferretti J.J."/>
            <person name="Karasawa T."/>
            <person name="Suvorov A.N."/>
            <person name="Lin S."/>
            <person name="Qin B."/>
            <person name="Jia H."/>
            <person name="Kenton S."/>
            <person name="Najar F."/>
            <person name="Wu H."/>
            <person name="Scott J."/>
            <person name="Roe B.A."/>
            <person name="Savic D.J."/>
        </authorList>
    </citation>
    <scope>NUCLEOTIDE SEQUENCE [LARGE SCALE GENOMIC DNA]</scope>
    <source>
        <strain>NZ131</strain>
    </source>
</reference>
<gene>
    <name evidence="1" type="primary">tmk</name>
    <name type="ordered locus">Spy49_0326</name>
</gene>
<proteinExistence type="inferred from homology"/>
<protein>
    <recommendedName>
        <fullName evidence="1">Thymidylate kinase</fullName>
        <ecNumber evidence="1">2.7.4.9</ecNumber>
    </recommendedName>
    <alternativeName>
        <fullName evidence="1">dTMP kinase</fullName>
    </alternativeName>
</protein>
<keyword id="KW-0067">ATP-binding</keyword>
<keyword id="KW-0418">Kinase</keyword>
<keyword id="KW-0545">Nucleotide biosynthesis</keyword>
<keyword id="KW-0547">Nucleotide-binding</keyword>
<keyword id="KW-0808">Transferase</keyword>
<feature type="chain" id="PRO_1000097434" description="Thymidylate kinase">
    <location>
        <begin position="1"/>
        <end position="211"/>
    </location>
</feature>
<feature type="binding site" evidence="1">
    <location>
        <begin position="11"/>
        <end position="18"/>
    </location>
    <ligand>
        <name>ATP</name>
        <dbReference type="ChEBI" id="CHEBI:30616"/>
    </ligand>
</feature>
<comment type="function">
    <text evidence="1">Phosphorylation of dTMP to form dTDP in both de novo and salvage pathways of dTTP synthesis.</text>
</comment>
<comment type="catalytic activity">
    <reaction evidence="1">
        <text>dTMP + ATP = dTDP + ADP</text>
        <dbReference type="Rhea" id="RHEA:13517"/>
        <dbReference type="ChEBI" id="CHEBI:30616"/>
        <dbReference type="ChEBI" id="CHEBI:58369"/>
        <dbReference type="ChEBI" id="CHEBI:63528"/>
        <dbReference type="ChEBI" id="CHEBI:456216"/>
        <dbReference type="EC" id="2.7.4.9"/>
    </reaction>
</comment>
<comment type="similarity">
    <text evidence="1">Belongs to the thymidylate kinase family.</text>
</comment>
<dbReference type="EC" id="2.7.4.9" evidence="1"/>
<dbReference type="EMBL" id="CP000829">
    <property type="protein sequence ID" value="ACI60662.1"/>
    <property type="molecule type" value="Genomic_DNA"/>
</dbReference>
<dbReference type="SMR" id="B5XK00"/>
<dbReference type="KEGG" id="soz:Spy49_0326"/>
<dbReference type="HOGENOM" id="CLU_049131_0_2_9"/>
<dbReference type="Proteomes" id="UP000001039">
    <property type="component" value="Chromosome"/>
</dbReference>
<dbReference type="GO" id="GO:0005829">
    <property type="term" value="C:cytosol"/>
    <property type="evidence" value="ECO:0007669"/>
    <property type="project" value="TreeGrafter"/>
</dbReference>
<dbReference type="GO" id="GO:0005524">
    <property type="term" value="F:ATP binding"/>
    <property type="evidence" value="ECO:0007669"/>
    <property type="project" value="UniProtKB-UniRule"/>
</dbReference>
<dbReference type="GO" id="GO:0004798">
    <property type="term" value="F:dTMP kinase activity"/>
    <property type="evidence" value="ECO:0007669"/>
    <property type="project" value="UniProtKB-UniRule"/>
</dbReference>
<dbReference type="GO" id="GO:0006233">
    <property type="term" value="P:dTDP biosynthetic process"/>
    <property type="evidence" value="ECO:0007669"/>
    <property type="project" value="InterPro"/>
</dbReference>
<dbReference type="GO" id="GO:0006235">
    <property type="term" value="P:dTTP biosynthetic process"/>
    <property type="evidence" value="ECO:0007669"/>
    <property type="project" value="UniProtKB-UniRule"/>
</dbReference>
<dbReference type="GO" id="GO:0006227">
    <property type="term" value="P:dUDP biosynthetic process"/>
    <property type="evidence" value="ECO:0007669"/>
    <property type="project" value="TreeGrafter"/>
</dbReference>
<dbReference type="CDD" id="cd01672">
    <property type="entry name" value="TMPK"/>
    <property type="match status" value="1"/>
</dbReference>
<dbReference type="FunFam" id="3.40.50.300:FF:000225">
    <property type="entry name" value="Thymidylate kinase"/>
    <property type="match status" value="1"/>
</dbReference>
<dbReference type="Gene3D" id="3.40.50.300">
    <property type="entry name" value="P-loop containing nucleotide triphosphate hydrolases"/>
    <property type="match status" value="1"/>
</dbReference>
<dbReference type="HAMAP" id="MF_00165">
    <property type="entry name" value="Thymidylate_kinase"/>
    <property type="match status" value="1"/>
</dbReference>
<dbReference type="InterPro" id="IPR027417">
    <property type="entry name" value="P-loop_NTPase"/>
</dbReference>
<dbReference type="InterPro" id="IPR039430">
    <property type="entry name" value="Thymidylate_kin-like_dom"/>
</dbReference>
<dbReference type="InterPro" id="IPR018094">
    <property type="entry name" value="Thymidylate_kinase"/>
</dbReference>
<dbReference type="NCBIfam" id="TIGR00041">
    <property type="entry name" value="DTMP_kinase"/>
    <property type="match status" value="1"/>
</dbReference>
<dbReference type="PANTHER" id="PTHR10344">
    <property type="entry name" value="THYMIDYLATE KINASE"/>
    <property type="match status" value="1"/>
</dbReference>
<dbReference type="PANTHER" id="PTHR10344:SF4">
    <property type="entry name" value="UMP-CMP KINASE 2, MITOCHONDRIAL"/>
    <property type="match status" value="1"/>
</dbReference>
<dbReference type="Pfam" id="PF02223">
    <property type="entry name" value="Thymidylate_kin"/>
    <property type="match status" value="1"/>
</dbReference>
<dbReference type="SUPFAM" id="SSF52540">
    <property type="entry name" value="P-loop containing nucleoside triphosphate hydrolases"/>
    <property type="match status" value="1"/>
</dbReference>
<accession>B5XK00</accession>
<sequence length="211" mass="23404">MITGKLITVEGPDGAGKTTVLEQLIPLLKQKVAQDILTTREPGGVAISEHIRELILDINHTAMDPKTELLLYIAARRQHLVEKVLPALEAGQLVFIDRFIDSSVAYQGAGRGLTKADIQWLNEFATDGLEPDLTLYFDVPSEIGLARINANQQREINRLDLETIEIHQRVRKGYLALAKEHPKRIVTIDATKPLKEVVSVALEHVLALLLA</sequence>
<name>KTHY_STRPZ</name>
<organism>
    <name type="scientific">Streptococcus pyogenes serotype M49 (strain NZ131)</name>
    <dbReference type="NCBI Taxonomy" id="471876"/>
    <lineage>
        <taxon>Bacteria</taxon>
        <taxon>Bacillati</taxon>
        <taxon>Bacillota</taxon>
        <taxon>Bacilli</taxon>
        <taxon>Lactobacillales</taxon>
        <taxon>Streptococcaceae</taxon>
        <taxon>Streptococcus</taxon>
    </lineage>
</organism>
<evidence type="ECO:0000255" key="1">
    <source>
        <dbReference type="HAMAP-Rule" id="MF_00165"/>
    </source>
</evidence>